<keyword id="KW-1185">Reference proteome</keyword>
<keyword id="KW-0687">Ribonucleoprotein</keyword>
<keyword id="KW-0689">Ribosomal protein</keyword>
<keyword id="KW-0694">RNA-binding</keyword>
<keyword id="KW-0699">rRNA-binding</keyword>
<keyword id="KW-0820">tRNA-binding</keyword>
<feature type="chain" id="PRO_0000062233" description="Large ribosomal subunit protein uL16">
    <location>
        <begin position="1"/>
        <end position="144"/>
    </location>
</feature>
<evidence type="ECO:0000255" key="1">
    <source>
        <dbReference type="HAMAP-Rule" id="MF_01342"/>
    </source>
</evidence>
<evidence type="ECO:0000305" key="2"/>
<dbReference type="EMBL" id="AE008691">
    <property type="protein sequence ID" value="AAM25428.1"/>
    <property type="molecule type" value="Genomic_DNA"/>
</dbReference>
<dbReference type="RefSeq" id="WP_011026331.1">
    <property type="nucleotide sequence ID" value="NZ_JANUCV010000001.1"/>
</dbReference>
<dbReference type="SMR" id="Q8R7W1"/>
<dbReference type="STRING" id="273068.TTE2285"/>
<dbReference type="KEGG" id="tte:TTE2285"/>
<dbReference type="eggNOG" id="COG0197">
    <property type="taxonomic scope" value="Bacteria"/>
</dbReference>
<dbReference type="HOGENOM" id="CLU_078858_2_1_9"/>
<dbReference type="OrthoDB" id="9802589at2"/>
<dbReference type="Proteomes" id="UP000000555">
    <property type="component" value="Chromosome"/>
</dbReference>
<dbReference type="GO" id="GO:0022625">
    <property type="term" value="C:cytosolic large ribosomal subunit"/>
    <property type="evidence" value="ECO:0007669"/>
    <property type="project" value="TreeGrafter"/>
</dbReference>
<dbReference type="GO" id="GO:0019843">
    <property type="term" value="F:rRNA binding"/>
    <property type="evidence" value="ECO:0007669"/>
    <property type="project" value="UniProtKB-UniRule"/>
</dbReference>
<dbReference type="GO" id="GO:0003735">
    <property type="term" value="F:structural constituent of ribosome"/>
    <property type="evidence" value="ECO:0007669"/>
    <property type="project" value="InterPro"/>
</dbReference>
<dbReference type="GO" id="GO:0000049">
    <property type="term" value="F:tRNA binding"/>
    <property type="evidence" value="ECO:0007669"/>
    <property type="project" value="UniProtKB-KW"/>
</dbReference>
<dbReference type="GO" id="GO:0006412">
    <property type="term" value="P:translation"/>
    <property type="evidence" value="ECO:0007669"/>
    <property type="project" value="UniProtKB-UniRule"/>
</dbReference>
<dbReference type="CDD" id="cd01433">
    <property type="entry name" value="Ribosomal_L16_L10e"/>
    <property type="match status" value="1"/>
</dbReference>
<dbReference type="FunFam" id="3.90.1170.10:FF:000001">
    <property type="entry name" value="50S ribosomal protein L16"/>
    <property type="match status" value="1"/>
</dbReference>
<dbReference type="Gene3D" id="3.90.1170.10">
    <property type="entry name" value="Ribosomal protein L10e/L16"/>
    <property type="match status" value="1"/>
</dbReference>
<dbReference type="HAMAP" id="MF_01342">
    <property type="entry name" value="Ribosomal_uL16"/>
    <property type="match status" value="1"/>
</dbReference>
<dbReference type="InterPro" id="IPR047873">
    <property type="entry name" value="Ribosomal_uL16"/>
</dbReference>
<dbReference type="InterPro" id="IPR000114">
    <property type="entry name" value="Ribosomal_uL16_bact-type"/>
</dbReference>
<dbReference type="InterPro" id="IPR020798">
    <property type="entry name" value="Ribosomal_uL16_CS"/>
</dbReference>
<dbReference type="InterPro" id="IPR016180">
    <property type="entry name" value="Ribosomal_uL16_dom"/>
</dbReference>
<dbReference type="InterPro" id="IPR036920">
    <property type="entry name" value="Ribosomal_uL16_sf"/>
</dbReference>
<dbReference type="NCBIfam" id="TIGR01164">
    <property type="entry name" value="rplP_bact"/>
    <property type="match status" value="1"/>
</dbReference>
<dbReference type="PANTHER" id="PTHR12220">
    <property type="entry name" value="50S/60S RIBOSOMAL PROTEIN L16"/>
    <property type="match status" value="1"/>
</dbReference>
<dbReference type="PANTHER" id="PTHR12220:SF13">
    <property type="entry name" value="LARGE RIBOSOMAL SUBUNIT PROTEIN UL16M"/>
    <property type="match status" value="1"/>
</dbReference>
<dbReference type="Pfam" id="PF00252">
    <property type="entry name" value="Ribosomal_L16"/>
    <property type="match status" value="1"/>
</dbReference>
<dbReference type="PRINTS" id="PR00060">
    <property type="entry name" value="RIBOSOMALL16"/>
</dbReference>
<dbReference type="SUPFAM" id="SSF54686">
    <property type="entry name" value="Ribosomal protein L16p/L10e"/>
    <property type="match status" value="1"/>
</dbReference>
<dbReference type="PROSITE" id="PS00586">
    <property type="entry name" value="RIBOSOMAL_L16_1"/>
    <property type="match status" value="1"/>
</dbReference>
<dbReference type="PROSITE" id="PS00701">
    <property type="entry name" value="RIBOSOMAL_L16_2"/>
    <property type="match status" value="1"/>
</dbReference>
<reference key="1">
    <citation type="journal article" date="2002" name="Genome Res.">
        <title>A complete sequence of the T. tengcongensis genome.</title>
        <authorList>
            <person name="Bao Q."/>
            <person name="Tian Y."/>
            <person name="Li W."/>
            <person name="Xu Z."/>
            <person name="Xuan Z."/>
            <person name="Hu S."/>
            <person name="Dong W."/>
            <person name="Yang J."/>
            <person name="Chen Y."/>
            <person name="Xue Y."/>
            <person name="Xu Y."/>
            <person name="Lai X."/>
            <person name="Huang L."/>
            <person name="Dong X."/>
            <person name="Ma Y."/>
            <person name="Ling L."/>
            <person name="Tan H."/>
            <person name="Chen R."/>
            <person name="Wang J."/>
            <person name="Yu J."/>
            <person name="Yang H."/>
        </authorList>
    </citation>
    <scope>NUCLEOTIDE SEQUENCE [LARGE SCALE GENOMIC DNA]</scope>
    <source>
        <strain>DSM 15242 / JCM 11007 / NBRC 100824 / MB4</strain>
    </source>
</reference>
<name>RL16_CALS4</name>
<proteinExistence type="inferred from homology"/>
<sequence>MLMPKRVKYRKQQRGRIKGNATRGNTLTYGEYGLQALEPGWITATQIEAARVAMTRYIKRGGKVWIKIFPDKPVTKKPAETRMGSGKGSPEFWVAVVKPGRVLFEIGGVSEDVAKEALRLAMHKLPIKTKFLKREELGGESNES</sequence>
<accession>Q8R7W1</accession>
<protein>
    <recommendedName>
        <fullName evidence="1">Large ribosomal subunit protein uL16</fullName>
    </recommendedName>
    <alternativeName>
        <fullName evidence="2">50S ribosomal protein L16</fullName>
    </alternativeName>
</protein>
<organism>
    <name type="scientific">Caldanaerobacter subterraneus subsp. tengcongensis (strain DSM 15242 / JCM 11007 / NBRC 100824 / MB4)</name>
    <name type="common">Thermoanaerobacter tengcongensis</name>
    <dbReference type="NCBI Taxonomy" id="273068"/>
    <lineage>
        <taxon>Bacteria</taxon>
        <taxon>Bacillati</taxon>
        <taxon>Bacillota</taxon>
        <taxon>Clostridia</taxon>
        <taxon>Thermoanaerobacterales</taxon>
        <taxon>Thermoanaerobacteraceae</taxon>
        <taxon>Caldanaerobacter</taxon>
    </lineage>
</organism>
<gene>
    <name evidence="1" type="primary">rplP</name>
    <name type="ordered locus">TTE2285</name>
</gene>
<comment type="function">
    <text evidence="1">Binds 23S rRNA and is also seen to make contacts with the A and possibly P site tRNAs.</text>
</comment>
<comment type="subunit">
    <text evidence="1">Part of the 50S ribosomal subunit.</text>
</comment>
<comment type="similarity">
    <text evidence="1">Belongs to the universal ribosomal protein uL16 family.</text>
</comment>